<reference key="1">
    <citation type="journal article" date="2008" name="J. Bacteriol.">
        <title>Complete genome sequence of uropathogenic Proteus mirabilis, a master of both adherence and motility.</title>
        <authorList>
            <person name="Pearson M.M."/>
            <person name="Sebaihia M."/>
            <person name="Churcher C."/>
            <person name="Quail M.A."/>
            <person name="Seshasayee A.S."/>
            <person name="Luscombe N.M."/>
            <person name="Abdellah Z."/>
            <person name="Arrosmith C."/>
            <person name="Atkin B."/>
            <person name="Chillingworth T."/>
            <person name="Hauser H."/>
            <person name="Jagels K."/>
            <person name="Moule S."/>
            <person name="Mungall K."/>
            <person name="Norbertczak H."/>
            <person name="Rabbinowitsch E."/>
            <person name="Walker D."/>
            <person name="Whithead S."/>
            <person name="Thomson N.R."/>
            <person name="Rather P.N."/>
            <person name="Parkhill J."/>
            <person name="Mobley H.L.T."/>
        </authorList>
    </citation>
    <scope>NUCLEOTIDE SEQUENCE [LARGE SCALE GENOMIC DNA]</scope>
    <source>
        <strain>HI4320</strain>
    </source>
</reference>
<keyword id="KW-0067">ATP-binding</keyword>
<keyword id="KW-0963">Cytoplasm</keyword>
<keyword id="KW-0235">DNA replication</keyword>
<keyword id="KW-0238">DNA-binding</keyword>
<keyword id="KW-0446">Lipid-binding</keyword>
<keyword id="KW-0547">Nucleotide-binding</keyword>
<keyword id="KW-1185">Reference proteome</keyword>
<comment type="function">
    <text evidence="1">Plays an essential role in the initiation and regulation of chromosomal replication. ATP-DnaA binds to the origin of replication (oriC) to initiate formation of the DNA replication initiation complex once per cell cycle. Binds the DnaA box (a 9 base pair repeat at the origin) and separates the double-stranded (ds)DNA. Forms a right-handed helical filament on oriC DNA; dsDNA binds to the exterior of the filament while single-stranded (ss)DNA is stabiized in the filament's interior. The ATP-DnaA-oriC complex binds and stabilizes one strand of the AT-rich DNA unwinding element (DUE), permitting loading of DNA polymerase. After initiation quickly degrades to an ADP-DnaA complex that is not apt for DNA replication. Binds acidic phospholipids.</text>
</comment>
<comment type="subunit">
    <text evidence="1">Oligomerizes as a right-handed, spiral filament on DNA at oriC.</text>
</comment>
<comment type="subcellular location">
    <subcellularLocation>
        <location evidence="1">Cytoplasm</location>
    </subcellularLocation>
</comment>
<comment type="domain">
    <text evidence="1">Domain I is involved in oligomerization and binding regulators, domain II is flexibile and of varying length in different bacteria, domain III forms the AAA+ region, while domain IV binds dsDNA.</text>
</comment>
<comment type="similarity">
    <text evidence="1">Belongs to the DnaA family.</text>
</comment>
<protein>
    <recommendedName>
        <fullName evidence="1">Chromosomal replication initiator protein DnaA</fullName>
    </recommendedName>
</protein>
<dbReference type="EMBL" id="AM942759">
    <property type="protein sequence ID" value="CAR46152.1"/>
    <property type="molecule type" value="Genomic_DNA"/>
</dbReference>
<dbReference type="RefSeq" id="WP_004246507.1">
    <property type="nucleotide sequence ID" value="NC_010554.1"/>
</dbReference>
<dbReference type="SMR" id="B4F0U5"/>
<dbReference type="EnsemblBacteria" id="CAR46152">
    <property type="protein sequence ID" value="CAR46152"/>
    <property type="gene ID" value="PMI3132"/>
</dbReference>
<dbReference type="GeneID" id="6801995"/>
<dbReference type="KEGG" id="pmr:PMI3132"/>
<dbReference type="eggNOG" id="COG0593">
    <property type="taxonomic scope" value="Bacteria"/>
</dbReference>
<dbReference type="HOGENOM" id="CLU_026910_0_1_6"/>
<dbReference type="Proteomes" id="UP000008319">
    <property type="component" value="Chromosome"/>
</dbReference>
<dbReference type="GO" id="GO:0005737">
    <property type="term" value="C:cytoplasm"/>
    <property type="evidence" value="ECO:0007669"/>
    <property type="project" value="UniProtKB-SubCell"/>
</dbReference>
<dbReference type="GO" id="GO:0005886">
    <property type="term" value="C:plasma membrane"/>
    <property type="evidence" value="ECO:0007669"/>
    <property type="project" value="TreeGrafter"/>
</dbReference>
<dbReference type="GO" id="GO:0005524">
    <property type="term" value="F:ATP binding"/>
    <property type="evidence" value="ECO:0007669"/>
    <property type="project" value="UniProtKB-UniRule"/>
</dbReference>
<dbReference type="GO" id="GO:0016887">
    <property type="term" value="F:ATP hydrolysis activity"/>
    <property type="evidence" value="ECO:0007669"/>
    <property type="project" value="InterPro"/>
</dbReference>
<dbReference type="GO" id="GO:0003688">
    <property type="term" value="F:DNA replication origin binding"/>
    <property type="evidence" value="ECO:0007669"/>
    <property type="project" value="UniProtKB-UniRule"/>
</dbReference>
<dbReference type="GO" id="GO:0008289">
    <property type="term" value="F:lipid binding"/>
    <property type="evidence" value="ECO:0007669"/>
    <property type="project" value="UniProtKB-KW"/>
</dbReference>
<dbReference type="GO" id="GO:0006270">
    <property type="term" value="P:DNA replication initiation"/>
    <property type="evidence" value="ECO:0007669"/>
    <property type="project" value="UniProtKB-UniRule"/>
</dbReference>
<dbReference type="GO" id="GO:0006275">
    <property type="term" value="P:regulation of DNA replication"/>
    <property type="evidence" value="ECO:0007669"/>
    <property type="project" value="UniProtKB-UniRule"/>
</dbReference>
<dbReference type="CDD" id="cd00009">
    <property type="entry name" value="AAA"/>
    <property type="match status" value="1"/>
</dbReference>
<dbReference type="CDD" id="cd06571">
    <property type="entry name" value="Bac_DnaA_C"/>
    <property type="match status" value="1"/>
</dbReference>
<dbReference type="FunFam" id="1.10.1750.10:FF:000001">
    <property type="entry name" value="Chromosomal replication initiator protein DnaA"/>
    <property type="match status" value="1"/>
</dbReference>
<dbReference type="FunFam" id="1.10.8.60:FF:000003">
    <property type="entry name" value="Chromosomal replication initiator protein DnaA"/>
    <property type="match status" value="1"/>
</dbReference>
<dbReference type="FunFam" id="3.30.300.180:FF:000001">
    <property type="entry name" value="Chromosomal replication initiator protein DnaA"/>
    <property type="match status" value="1"/>
</dbReference>
<dbReference type="FunFam" id="3.40.50.300:FF:000103">
    <property type="entry name" value="Chromosomal replication initiator protein DnaA"/>
    <property type="match status" value="1"/>
</dbReference>
<dbReference type="Gene3D" id="1.10.1750.10">
    <property type="match status" value="1"/>
</dbReference>
<dbReference type="Gene3D" id="1.10.8.60">
    <property type="match status" value="1"/>
</dbReference>
<dbReference type="Gene3D" id="3.30.300.180">
    <property type="match status" value="1"/>
</dbReference>
<dbReference type="Gene3D" id="3.40.50.300">
    <property type="entry name" value="P-loop containing nucleotide triphosphate hydrolases"/>
    <property type="match status" value="1"/>
</dbReference>
<dbReference type="HAMAP" id="MF_00377">
    <property type="entry name" value="DnaA_bact"/>
    <property type="match status" value="1"/>
</dbReference>
<dbReference type="InterPro" id="IPR003593">
    <property type="entry name" value="AAA+_ATPase"/>
</dbReference>
<dbReference type="InterPro" id="IPR001957">
    <property type="entry name" value="Chromosome_initiator_DnaA"/>
</dbReference>
<dbReference type="InterPro" id="IPR020591">
    <property type="entry name" value="Chromosome_initiator_DnaA-like"/>
</dbReference>
<dbReference type="InterPro" id="IPR018312">
    <property type="entry name" value="Chromosome_initiator_DnaA_CS"/>
</dbReference>
<dbReference type="InterPro" id="IPR013159">
    <property type="entry name" value="DnaA_C"/>
</dbReference>
<dbReference type="InterPro" id="IPR013317">
    <property type="entry name" value="DnaA_dom"/>
</dbReference>
<dbReference type="InterPro" id="IPR024633">
    <property type="entry name" value="DnaA_N_dom"/>
</dbReference>
<dbReference type="InterPro" id="IPR038454">
    <property type="entry name" value="DnaA_N_sf"/>
</dbReference>
<dbReference type="InterPro" id="IPR055199">
    <property type="entry name" value="Hda_lid"/>
</dbReference>
<dbReference type="InterPro" id="IPR027417">
    <property type="entry name" value="P-loop_NTPase"/>
</dbReference>
<dbReference type="InterPro" id="IPR010921">
    <property type="entry name" value="Trp_repressor/repl_initiator"/>
</dbReference>
<dbReference type="NCBIfam" id="TIGR00362">
    <property type="entry name" value="DnaA"/>
    <property type="match status" value="1"/>
</dbReference>
<dbReference type="PANTHER" id="PTHR30050">
    <property type="entry name" value="CHROMOSOMAL REPLICATION INITIATOR PROTEIN DNAA"/>
    <property type="match status" value="1"/>
</dbReference>
<dbReference type="PANTHER" id="PTHR30050:SF2">
    <property type="entry name" value="CHROMOSOMAL REPLICATION INITIATOR PROTEIN DNAA"/>
    <property type="match status" value="1"/>
</dbReference>
<dbReference type="Pfam" id="PF00308">
    <property type="entry name" value="Bac_DnaA"/>
    <property type="match status" value="1"/>
</dbReference>
<dbReference type="Pfam" id="PF08299">
    <property type="entry name" value="Bac_DnaA_C"/>
    <property type="match status" value="1"/>
</dbReference>
<dbReference type="Pfam" id="PF11638">
    <property type="entry name" value="DnaA_N"/>
    <property type="match status" value="1"/>
</dbReference>
<dbReference type="Pfam" id="PF22688">
    <property type="entry name" value="Hda_lid"/>
    <property type="match status" value="1"/>
</dbReference>
<dbReference type="PRINTS" id="PR00051">
    <property type="entry name" value="DNAA"/>
</dbReference>
<dbReference type="SMART" id="SM00382">
    <property type="entry name" value="AAA"/>
    <property type="match status" value="1"/>
</dbReference>
<dbReference type="SMART" id="SM00760">
    <property type="entry name" value="Bac_DnaA_C"/>
    <property type="match status" value="1"/>
</dbReference>
<dbReference type="SUPFAM" id="SSF52540">
    <property type="entry name" value="P-loop containing nucleoside triphosphate hydrolases"/>
    <property type="match status" value="1"/>
</dbReference>
<dbReference type="SUPFAM" id="SSF48295">
    <property type="entry name" value="TrpR-like"/>
    <property type="match status" value="1"/>
</dbReference>
<dbReference type="PROSITE" id="PS01008">
    <property type="entry name" value="DNAA"/>
    <property type="match status" value="1"/>
</dbReference>
<accession>B4F0U5</accession>
<name>DNAA_PROMH</name>
<feature type="chain" id="PRO_1000122003" description="Chromosomal replication initiator protein DnaA">
    <location>
        <begin position="1"/>
        <end position="466"/>
    </location>
</feature>
<feature type="region of interest" description="Domain I, interacts with DnaA modulators" evidence="1">
    <location>
        <begin position="1"/>
        <end position="85"/>
    </location>
</feature>
<feature type="region of interest" description="Disordered" evidence="2">
    <location>
        <begin position="82"/>
        <end position="122"/>
    </location>
</feature>
<feature type="region of interest" description="Domain II" evidence="1">
    <location>
        <begin position="85"/>
        <end position="129"/>
    </location>
</feature>
<feature type="region of interest" description="Domain III, AAA+ region" evidence="1">
    <location>
        <begin position="130"/>
        <end position="346"/>
    </location>
</feature>
<feature type="region of interest" description="Domain IV, binds dsDNA" evidence="1">
    <location>
        <begin position="347"/>
        <end position="466"/>
    </location>
</feature>
<feature type="compositionally biased region" description="Polar residues" evidence="2">
    <location>
        <begin position="85"/>
        <end position="122"/>
    </location>
</feature>
<feature type="binding site" evidence="1">
    <location>
        <position position="174"/>
    </location>
    <ligand>
        <name>ATP</name>
        <dbReference type="ChEBI" id="CHEBI:30616"/>
    </ligand>
</feature>
<feature type="binding site" evidence="1">
    <location>
        <position position="176"/>
    </location>
    <ligand>
        <name>ATP</name>
        <dbReference type="ChEBI" id="CHEBI:30616"/>
    </ligand>
</feature>
<feature type="binding site" evidence="1">
    <location>
        <position position="177"/>
    </location>
    <ligand>
        <name>ATP</name>
        <dbReference type="ChEBI" id="CHEBI:30616"/>
    </ligand>
</feature>
<feature type="binding site" evidence="1">
    <location>
        <position position="178"/>
    </location>
    <ligand>
        <name>ATP</name>
        <dbReference type="ChEBI" id="CHEBI:30616"/>
    </ligand>
</feature>
<sequence>MSLSLWQHCLARLQDELPATEFSMWIRPLQAELSDNTLALYAPNRFVLDWVREKYINNINALLVDFCGSDVPSLRFEVGNKPVSARTTESVPKTVTHPAVNSTPTNSQPVRPSWDNQPQSQLPELNYRSNVNPKHKFDNFVEGKSNQLARAAARQVADNPGGAYNPLFLYGGTGLGKTHLLHAVGNSIMERKANAKVVYMHSERFVQDMVKALQNNAIEDFKRYYRSVDALLIDDIQFFANKERSQEEFFHTFNALLEGNQQIILTSDRYPKEINGVEDRLKSRFGWGLTVAIEPPELETRVAILMKKADENQIQLPDEVAFFIAKRLRSNVRELEGALNRVIANANFTGRAITIDFVREALRDLLALQEKLVTIDNIQKTVAEYYKIKVADLLSKRRSRSVARPRQMAMALAKELTNHSLPEIGDAFGGRDHTTVLHACRKIEQLREESHDIKEDFSNLIRTLSS</sequence>
<gene>
    <name evidence="1" type="primary">dnaA</name>
    <name type="ordered locus">PMI3132</name>
</gene>
<evidence type="ECO:0000255" key="1">
    <source>
        <dbReference type="HAMAP-Rule" id="MF_00377"/>
    </source>
</evidence>
<evidence type="ECO:0000256" key="2">
    <source>
        <dbReference type="SAM" id="MobiDB-lite"/>
    </source>
</evidence>
<proteinExistence type="inferred from homology"/>
<organism>
    <name type="scientific">Proteus mirabilis (strain HI4320)</name>
    <dbReference type="NCBI Taxonomy" id="529507"/>
    <lineage>
        <taxon>Bacteria</taxon>
        <taxon>Pseudomonadati</taxon>
        <taxon>Pseudomonadota</taxon>
        <taxon>Gammaproteobacteria</taxon>
        <taxon>Enterobacterales</taxon>
        <taxon>Morganellaceae</taxon>
        <taxon>Proteus</taxon>
    </lineage>
</organism>